<evidence type="ECO:0000255" key="1"/>
<evidence type="ECO:0000305" key="2"/>
<protein>
    <recommendedName>
        <fullName>Uncharacterized protein HI_1127</fullName>
    </recommendedName>
</protein>
<gene>
    <name type="ordered locus">HI_1127</name>
</gene>
<sequence length="138" mass="15599">MLHAKVVYDSSLHFLGFIGGIFAILGVIVLPITSGDTAFRAARLQIAEIFNVDQRSLPKRLLIAVPLFVLGYFISTIDFSVLWRYFTWANQMTAMVMLWTAAGYLYRYHKFHWVASLPAWFITTVCALICSTTKLVSA</sequence>
<name>Y1127_HAEIN</name>
<proteinExistence type="predicted"/>
<reference key="1">
    <citation type="journal article" date="1995" name="Science">
        <title>Whole-genome random sequencing and assembly of Haemophilus influenzae Rd.</title>
        <authorList>
            <person name="Fleischmann R.D."/>
            <person name="Adams M.D."/>
            <person name="White O."/>
            <person name="Clayton R.A."/>
            <person name="Kirkness E.F."/>
            <person name="Kerlavage A.R."/>
            <person name="Bult C.J."/>
            <person name="Tomb J.-F."/>
            <person name="Dougherty B.A."/>
            <person name="Merrick J.M."/>
            <person name="McKenney K."/>
            <person name="Sutton G.G."/>
            <person name="FitzHugh W."/>
            <person name="Fields C.A."/>
            <person name="Gocayne J.D."/>
            <person name="Scott J.D."/>
            <person name="Shirley R."/>
            <person name="Liu L.-I."/>
            <person name="Glodek A."/>
            <person name="Kelley J.M."/>
            <person name="Weidman J.F."/>
            <person name="Phillips C.A."/>
            <person name="Spriggs T."/>
            <person name="Hedblom E."/>
            <person name="Cotton M.D."/>
            <person name="Utterback T.R."/>
            <person name="Hanna M.C."/>
            <person name="Nguyen D.T."/>
            <person name="Saudek D.M."/>
            <person name="Brandon R.C."/>
            <person name="Fine L.D."/>
            <person name="Fritchman J.L."/>
            <person name="Fuhrmann J.L."/>
            <person name="Geoghagen N.S.M."/>
            <person name="Gnehm C.L."/>
            <person name="McDonald L.A."/>
            <person name="Small K.V."/>
            <person name="Fraser C.M."/>
            <person name="Smith H.O."/>
            <person name="Venter J.C."/>
        </authorList>
    </citation>
    <scope>NUCLEOTIDE SEQUENCE [LARGE SCALE GENOMIC DNA]</scope>
    <source>
        <strain>ATCC 51907 / DSM 11121 / KW20 / Rd</strain>
    </source>
</reference>
<reference key="2">
    <citation type="submission" date="1998-05" db="EMBL/GenBank/DDBJ databases">
        <authorList>
            <person name="White O."/>
            <person name="Clayton R.A."/>
            <person name="Kerlavage A.R."/>
            <person name="Fleischmann R.D."/>
            <person name="Peterson J."/>
            <person name="Hickey E."/>
            <person name="Dodson R."/>
            <person name="Gwinn M."/>
        </authorList>
    </citation>
    <scope>IDENTIFICATION</scope>
</reference>
<feature type="chain" id="PRO_0000078006" description="Uncharacterized protein HI_1127">
    <location>
        <begin position="1"/>
        <end position="138"/>
    </location>
</feature>
<feature type="transmembrane region" description="Helical" evidence="1">
    <location>
        <begin position="12"/>
        <end position="32"/>
    </location>
</feature>
<feature type="transmembrane region" description="Helical" evidence="1">
    <location>
        <begin position="62"/>
        <end position="82"/>
    </location>
</feature>
<feature type="transmembrane region" description="Helical" evidence="1">
    <location>
        <begin position="111"/>
        <end position="131"/>
    </location>
</feature>
<organism>
    <name type="scientific">Haemophilus influenzae (strain ATCC 51907 / DSM 11121 / KW20 / Rd)</name>
    <dbReference type="NCBI Taxonomy" id="71421"/>
    <lineage>
        <taxon>Bacteria</taxon>
        <taxon>Pseudomonadati</taxon>
        <taxon>Pseudomonadota</taxon>
        <taxon>Gammaproteobacteria</taxon>
        <taxon>Pasteurellales</taxon>
        <taxon>Pasteurellaceae</taxon>
        <taxon>Haemophilus</taxon>
    </lineage>
</organism>
<comment type="subcellular location">
    <subcellularLocation>
        <location evidence="2">Cell membrane</location>
        <topology evidence="2">Multi-pass membrane protein</topology>
    </subcellularLocation>
</comment>
<dbReference type="EMBL" id="L42023">
    <property type="protein sequence ID" value="AAC22782.1"/>
    <property type="molecule type" value="Genomic_DNA"/>
</dbReference>
<dbReference type="STRING" id="71421.HI_1127"/>
<dbReference type="EnsemblBacteria" id="AAC22782">
    <property type="protein sequence ID" value="AAC22782"/>
    <property type="gene ID" value="HI_1127"/>
</dbReference>
<dbReference type="KEGG" id="hin:HI_1127"/>
<dbReference type="eggNOG" id="COG1966">
    <property type="taxonomic scope" value="Bacteria"/>
</dbReference>
<dbReference type="HOGENOM" id="CLU_1852374_0_0_6"/>
<dbReference type="Proteomes" id="UP000000579">
    <property type="component" value="Chromosome"/>
</dbReference>
<dbReference type="GO" id="GO:0005886">
    <property type="term" value="C:plasma membrane"/>
    <property type="evidence" value="ECO:0007669"/>
    <property type="project" value="UniProtKB-SubCell"/>
</dbReference>
<dbReference type="InterPro" id="IPR051605">
    <property type="entry name" value="CstA"/>
</dbReference>
<dbReference type="PANTHER" id="PTHR30252:SF4">
    <property type="entry name" value="CARBON STARVATION"/>
    <property type="match status" value="1"/>
</dbReference>
<dbReference type="PANTHER" id="PTHR30252">
    <property type="entry name" value="INNER MEMBRANE PEPTIDE TRANSPORTER"/>
    <property type="match status" value="1"/>
</dbReference>
<keyword id="KW-1003">Cell membrane</keyword>
<keyword id="KW-0472">Membrane</keyword>
<keyword id="KW-1185">Reference proteome</keyword>
<keyword id="KW-0812">Transmembrane</keyword>
<keyword id="KW-1133">Transmembrane helix</keyword>
<accession>O86234</accession>